<sequence>MPGIAIIGAQWGDEGKGKVVDVLAREADYVIRYQGGANAGHTVVAEGKVFKLNLLPSGVIHPHAVNVLGDGMVIDPFRFQEEVEGLRKEGFDPKILVSERAHLVLPHHKHVESRHNFVGTTGRGIGPAYSDRARRVGIRAGDLLDEATLRERVRRLLAEKPNSTREAGWDTEEKALADLHRMREILSPYIADTGSLLREAWRKGKRLLFEGAQATLLDLNYGTYPYVTSSHPTVGGILVGTGLSHKAITKVYGVAKAYTTRVGEGPFPTELQGELAHHLREKGGEYGTTTGRPRRVGWLDLVALRYACEVNGFDGLVLTKLDVLSGLEKVKVAVEYLDGARPGEASPEAVRYLELPGWGDLSHVKRREDLPANLLRYLELVEEHTGVPVVLFSTSPRREDTFGAVSWV</sequence>
<accession>Q5SLS1</accession>
<comment type="function">
    <text evidence="1">Plays an important role in the de novo pathway of purine nucleotide biosynthesis. Catalyzes the first committed step in the biosynthesis of AMP from IMP.</text>
</comment>
<comment type="catalytic activity">
    <reaction evidence="1">
        <text>IMP + L-aspartate + GTP = N(6)-(1,2-dicarboxyethyl)-AMP + GDP + phosphate + 2 H(+)</text>
        <dbReference type="Rhea" id="RHEA:15753"/>
        <dbReference type="ChEBI" id="CHEBI:15378"/>
        <dbReference type="ChEBI" id="CHEBI:29991"/>
        <dbReference type="ChEBI" id="CHEBI:37565"/>
        <dbReference type="ChEBI" id="CHEBI:43474"/>
        <dbReference type="ChEBI" id="CHEBI:57567"/>
        <dbReference type="ChEBI" id="CHEBI:58053"/>
        <dbReference type="ChEBI" id="CHEBI:58189"/>
        <dbReference type="EC" id="6.3.4.4"/>
    </reaction>
</comment>
<comment type="cofactor">
    <cofactor evidence="1">
        <name>Mg(2+)</name>
        <dbReference type="ChEBI" id="CHEBI:18420"/>
    </cofactor>
    <text evidence="1">Binds 1 Mg(2+) ion per subunit.</text>
</comment>
<comment type="pathway">
    <text evidence="1">Purine metabolism; AMP biosynthesis via de novo pathway; AMP from IMP: step 1/2.</text>
</comment>
<comment type="subunit">
    <text evidence="1">Homodimer.</text>
</comment>
<comment type="subcellular location">
    <subcellularLocation>
        <location evidence="1">Cytoplasm</location>
    </subcellularLocation>
</comment>
<comment type="similarity">
    <text evidence="1">Belongs to the adenylosuccinate synthetase family.</text>
</comment>
<proteinExistence type="evidence at protein level"/>
<evidence type="ECO:0000255" key="1">
    <source>
        <dbReference type="HAMAP-Rule" id="MF_00011"/>
    </source>
</evidence>
<evidence type="ECO:0007829" key="2">
    <source>
        <dbReference type="PDB" id="6JRQ"/>
    </source>
</evidence>
<feature type="chain" id="PRO_0000224332" description="Adenylosuccinate synthetase">
    <location>
        <begin position="1"/>
        <end position="408"/>
    </location>
</feature>
<feature type="active site" description="Proton acceptor" evidence="1">
    <location>
        <position position="13"/>
    </location>
</feature>
<feature type="active site" description="Proton donor" evidence="1">
    <location>
        <position position="41"/>
    </location>
</feature>
<feature type="binding site" evidence="1">
    <location>
        <begin position="12"/>
        <end position="18"/>
    </location>
    <ligand>
        <name>GTP</name>
        <dbReference type="ChEBI" id="CHEBI:37565"/>
    </ligand>
</feature>
<feature type="binding site" description="in other chain" evidence="1">
    <location>
        <begin position="13"/>
        <end position="16"/>
    </location>
    <ligand>
        <name>IMP</name>
        <dbReference type="ChEBI" id="CHEBI:58053"/>
        <note>ligand shared between dimeric partners</note>
    </ligand>
</feature>
<feature type="binding site" evidence="1">
    <location>
        <position position="13"/>
    </location>
    <ligand>
        <name>Mg(2+)</name>
        <dbReference type="ChEBI" id="CHEBI:18420"/>
    </ligand>
</feature>
<feature type="binding site" description="in other chain" evidence="1">
    <location>
        <begin position="38"/>
        <end position="41"/>
    </location>
    <ligand>
        <name>IMP</name>
        <dbReference type="ChEBI" id="CHEBI:58053"/>
        <note>ligand shared between dimeric partners</note>
    </ligand>
</feature>
<feature type="binding site" evidence="1">
    <location>
        <begin position="40"/>
        <end position="42"/>
    </location>
    <ligand>
        <name>GTP</name>
        <dbReference type="ChEBI" id="CHEBI:37565"/>
    </ligand>
</feature>
<feature type="binding site" evidence="1">
    <location>
        <position position="40"/>
    </location>
    <ligand>
        <name>Mg(2+)</name>
        <dbReference type="ChEBI" id="CHEBI:18420"/>
    </ligand>
</feature>
<feature type="binding site" description="in other chain" evidence="1">
    <location>
        <position position="121"/>
    </location>
    <ligand>
        <name>IMP</name>
        <dbReference type="ChEBI" id="CHEBI:58053"/>
        <note>ligand shared between dimeric partners</note>
    </ligand>
</feature>
<feature type="binding site" evidence="1">
    <location>
        <position position="135"/>
    </location>
    <ligand>
        <name>IMP</name>
        <dbReference type="ChEBI" id="CHEBI:58053"/>
        <note>ligand shared between dimeric partners</note>
    </ligand>
</feature>
<feature type="binding site" description="in other chain" evidence="1">
    <location>
        <position position="213"/>
    </location>
    <ligand>
        <name>IMP</name>
        <dbReference type="ChEBI" id="CHEBI:58053"/>
        <note>ligand shared between dimeric partners</note>
    </ligand>
</feature>
<feature type="binding site" description="in other chain" evidence="1">
    <location>
        <position position="228"/>
    </location>
    <ligand>
        <name>IMP</name>
        <dbReference type="ChEBI" id="CHEBI:58053"/>
        <note>ligand shared between dimeric partners</note>
    </ligand>
</feature>
<feature type="binding site" evidence="1">
    <location>
        <begin position="288"/>
        <end position="294"/>
    </location>
    <ligand>
        <name>substrate</name>
    </ligand>
</feature>
<feature type="binding site" description="in other chain" evidence="1">
    <location>
        <position position="292"/>
    </location>
    <ligand>
        <name>IMP</name>
        <dbReference type="ChEBI" id="CHEBI:58053"/>
        <note>ligand shared between dimeric partners</note>
    </ligand>
</feature>
<feature type="binding site" evidence="1">
    <location>
        <position position="294"/>
    </location>
    <ligand>
        <name>GTP</name>
        <dbReference type="ChEBI" id="CHEBI:37565"/>
    </ligand>
</feature>
<feature type="binding site" evidence="1">
    <location>
        <begin position="320"/>
        <end position="322"/>
    </location>
    <ligand>
        <name>GTP</name>
        <dbReference type="ChEBI" id="CHEBI:37565"/>
    </ligand>
</feature>
<feature type="binding site" evidence="1">
    <location>
        <begin position="393"/>
        <end position="395"/>
    </location>
    <ligand>
        <name>GTP</name>
        <dbReference type="ChEBI" id="CHEBI:37565"/>
    </ligand>
</feature>
<feature type="strand" evidence="2">
    <location>
        <begin position="3"/>
        <end position="12"/>
    </location>
</feature>
<feature type="helix" evidence="2">
    <location>
        <begin position="17"/>
        <end position="24"/>
    </location>
</feature>
<feature type="strand" evidence="2">
    <location>
        <begin position="28"/>
        <end position="32"/>
    </location>
</feature>
<feature type="strand" evidence="2">
    <location>
        <begin position="41"/>
        <end position="45"/>
    </location>
</feature>
<feature type="strand" evidence="2">
    <location>
        <begin position="48"/>
        <end position="55"/>
    </location>
</feature>
<feature type="helix" evidence="2">
    <location>
        <begin position="57"/>
        <end position="60"/>
    </location>
</feature>
<feature type="strand" evidence="2">
    <location>
        <begin position="65"/>
        <end position="68"/>
    </location>
</feature>
<feature type="strand" evidence="2">
    <location>
        <begin position="72"/>
        <end position="74"/>
    </location>
</feature>
<feature type="helix" evidence="2">
    <location>
        <begin position="76"/>
        <end position="88"/>
    </location>
</feature>
<feature type="strand" evidence="2">
    <location>
        <begin position="94"/>
        <end position="98"/>
    </location>
</feature>
<feature type="helix" evidence="2">
    <location>
        <begin position="106"/>
        <end position="112"/>
    </location>
</feature>
<feature type="strand" evidence="2">
    <location>
        <begin position="122"/>
        <end position="124"/>
    </location>
</feature>
<feature type="helix" evidence="2">
    <location>
        <begin position="125"/>
        <end position="133"/>
    </location>
</feature>
<feature type="helix" evidence="2">
    <location>
        <begin position="140"/>
        <end position="144"/>
    </location>
</feature>
<feature type="helix" evidence="2">
    <location>
        <begin position="146"/>
        <end position="159"/>
    </location>
</feature>
<feature type="helix" evidence="2">
    <location>
        <begin position="161"/>
        <end position="166"/>
    </location>
</feature>
<feature type="helix" evidence="2">
    <location>
        <begin position="172"/>
        <end position="186"/>
    </location>
</feature>
<feature type="turn" evidence="2">
    <location>
        <begin position="187"/>
        <end position="189"/>
    </location>
</feature>
<feature type="helix" evidence="2">
    <location>
        <begin position="193"/>
        <end position="202"/>
    </location>
</feature>
<feature type="strand" evidence="2">
    <location>
        <begin position="207"/>
        <end position="210"/>
    </location>
</feature>
<feature type="helix" evidence="2">
    <location>
        <begin position="215"/>
        <end position="217"/>
    </location>
</feature>
<feature type="turn" evidence="2">
    <location>
        <begin position="219"/>
        <end position="221"/>
    </location>
</feature>
<feature type="helix" evidence="2">
    <location>
        <begin position="235"/>
        <end position="241"/>
    </location>
</feature>
<feature type="helix" evidence="2">
    <location>
        <begin position="245"/>
        <end position="247"/>
    </location>
</feature>
<feature type="strand" evidence="2">
    <location>
        <begin position="250"/>
        <end position="261"/>
    </location>
</feature>
<feature type="strand" evidence="2">
    <location>
        <begin position="263"/>
        <end position="265"/>
    </location>
</feature>
<feature type="helix" evidence="2">
    <location>
        <begin position="273"/>
        <end position="283"/>
    </location>
</feature>
<feature type="turn" evidence="2">
    <location>
        <begin position="288"/>
        <end position="290"/>
    </location>
</feature>
<feature type="strand" evidence="2">
    <location>
        <begin position="295"/>
        <end position="297"/>
    </location>
</feature>
<feature type="helix" evidence="2">
    <location>
        <begin position="301"/>
        <end position="311"/>
    </location>
</feature>
<feature type="strand" evidence="2">
    <location>
        <begin position="314"/>
        <end position="319"/>
    </location>
</feature>
<feature type="helix" evidence="2">
    <location>
        <begin position="321"/>
        <end position="323"/>
    </location>
</feature>
<feature type="strand" evidence="2">
    <location>
        <begin position="328"/>
        <end position="336"/>
    </location>
</feature>
<feature type="helix" evidence="2">
    <location>
        <begin position="347"/>
        <end position="349"/>
    </location>
</feature>
<feature type="strand" evidence="2">
    <location>
        <begin position="350"/>
        <end position="356"/>
    </location>
</feature>
<feature type="helix" evidence="2">
    <location>
        <begin position="367"/>
        <end position="369"/>
    </location>
</feature>
<feature type="helix" evidence="2">
    <location>
        <begin position="372"/>
        <end position="385"/>
    </location>
</feature>
<feature type="strand" evidence="2">
    <location>
        <begin position="389"/>
        <end position="397"/>
    </location>
</feature>
<feature type="strand" evidence="2">
    <location>
        <begin position="400"/>
        <end position="403"/>
    </location>
</feature>
<gene>
    <name evidence="1" type="primary">purA</name>
    <name type="ordered locus">TTHA0222</name>
</gene>
<reference key="1">
    <citation type="submission" date="2004-11" db="EMBL/GenBank/DDBJ databases">
        <title>Complete genome sequence of Thermus thermophilus HB8.</title>
        <authorList>
            <person name="Masui R."/>
            <person name="Kurokawa K."/>
            <person name="Nakagawa N."/>
            <person name="Tokunaga F."/>
            <person name="Koyama Y."/>
            <person name="Shibata T."/>
            <person name="Oshima T."/>
            <person name="Yokoyama S."/>
            <person name="Yasunaga T."/>
            <person name="Kuramitsu S."/>
        </authorList>
    </citation>
    <scope>NUCLEOTIDE SEQUENCE [LARGE SCALE GENOMIC DNA]</scope>
    <source>
        <strain>ATCC 27634 / DSM 579 / HB8</strain>
    </source>
</reference>
<keyword id="KW-0002">3D-structure</keyword>
<keyword id="KW-0963">Cytoplasm</keyword>
<keyword id="KW-0342">GTP-binding</keyword>
<keyword id="KW-0436">Ligase</keyword>
<keyword id="KW-0460">Magnesium</keyword>
<keyword id="KW-0479">Metal-binding</keyword>
<keyword id="KW-0547">Nucleotide-binding</keyword>
<keyword id="KW-0658">Purine biosynthesis</keyword>
<keyword id="KW-1185">Reference proteome</keyword>
<dbReference type="EC" id="6.3.4.4" evidence="1"/>
<dbReference type="EMBL" id="AP008226">
    <property type="protein sequence ID" value="BAD70045.1"/>
    <property type="molecule type" value="Genomic_DNA"/>
</dbReference>
<dbReference type="RefSeq" id="WP_011174122.1">
    <property type="nucleotide sequence ID" value="NC_006461.1"/>
</dbReference>
<dbReference type="RefSeq" id="YP_143488.1">
    <property type="nucleotide sequence ID" value="NC_006461.1"/>
</dbReference>
<dbReference type="PDB" id="6JRQ">
    <property type="method" value="X-ray"/>
    <property type="resolution" value="2.10 A"/>
    <property type="chains" value="A/B/C/D=1-408"/>
</dbReference>
<dbReference type="PDBsum" id="6JRQ"/>
<dbReference type="SMR" id="Q5SLS1"/>
<dbReference type="EnsemblBacteria" id="BAD70045">
    <property type="protein sequence ID" value="BAD70045"/>
    <property type="gene ID" value="BAD70045"/>
</dbReference>
<dbReference type="GeneID" id="3168479"/>
<dbReference type="KEGG" id="ttj:TTHA0222"/>
<dbReference type="PATRIC" id="fig|300852.9.peg.220"/>
<dbReference type="eggNOG" id="COG0104">
    <property type="taxonomic scope" value="Bacteria"/>
</dbReference>
<dbReference type="HOGENOM" id="CLU_029848_0_0_0"/>
<dbReference type="PhylomeDB" id="Q5SLS1"/>
<dbReference type="UniPathway" id="UPA00075">
    <property type="reaction ID" value="UER00335"/>
</dbReference>
<dbReference type="Proteomes" id="UP000000532">
    <property type="component" value="Chromosome"/>
</dbReference>
<dbReference type="GO" id="GO:0005737">
    <property type="term" value="C:cytoplasm"/>
    <property type="evidence" value="ECO:0007669"/>
    <property type="project" value="UniProtKB-SubCell"/>
</dbReference>
<dbReference type="GO" id="GO:0004019">
    <property type="term" value="F:adenylosuccinate synthase activity"/>
    <property type="evidence" value="ECO:0007669"/>
    <property type="project" value="UniProtKB-UniRule"/>
</dbReference>
<dbReference type="GO" id="GO:0005525">
    <property type="term" value="F:GTP binding"/>
    <property type="evidence" value="ECO:0007669"/>
    <property type="project" value="UniProtKB-UniRule"/>
</dbReference>
<dbReference type="GO" id="GO:0000287">
    <property type="term" value="F:magnesium ion binding"/>
    <property type="evidence" value="ECO:0007669"/>
    <property type="project" value="UniProtKB-UniRule"/>
</dbReference>
<dbReference type="GO" id="GO:0044208">
    <property type="term" value="P:'de novo' AMP biosynthetic process"/>
    <property type="evidence" value="ECO:0007669"/>
    <property type="project" value="UniProtKB-UniRule"/>
</dbReference>
<dbReference type="GO" id="GO:0046040">
    <property type="term" value="P:IMP metabolic process"/>
    <property type="evidence" value="ECO:0007669"/>
    <property type="project" value="TreeGrafter"/>
</dbReference>
<dbReference type="CDD" id="cd03108">
    <property type="entry name" value="AdSS"/>
    <property type="match status" value="1"/>
</dbReference>
<dbReference type="FunFam" id="3.90.170.10:FF:000001">
    <property type="entry name" value="Adenylosuccinate synthetase"/>
    <property type="match status" value="1"/>
</dbReference>
<dbReference type="Gene3D" id="3.40.440.10">
    <property type="entry name" value="Adenylosuccinate Synthetase, subunit A, domain 1"/>
    <property type="match status" value="1"/>
</dbReference>
<dbReference type="Gene3D" id="1.10.300.10">
    <property type="entry name" value="Adenylosuccinate Synthetase, subunit A, domain 2"/>
    <property type="match status" value="1"/>
</dbReference>
<dbReference type="Gene3D" id="3.90.170.10">
    <property type="entry name" value="Adenylosuccinate Synthetase, subunit A, domain 3"/>
    <property type="match status" value="1"/>
</dbReference>
<dbReference type="HAMAP" id="MF_00011">
    <property type="entry name" value="Adenylosucc_synth"/>
    <property type="match status" value="1"/>
</dbReference>
<dbReference type="InterPro" id="IPR018220">
    <property type="entry name" value="Adenylosuccin_syn_GTP-bd"/>
</dbReference>
<dbReference type="InterPro" id="IPR042109">
    <property type="entry name" value="Adenylosuccinate_synth_dom1"/>
</dbReference>
<dbReference type="InterPro" id="IPR042110">
    <property type="entry name" value="Adenylosuccinate_synth_dom2"/>
</dbReference>
<dbReference type="InterPro" id="IPR042111">
    <property type="entry name" value="Adenylosuccinate_synth_dom3"/>
</dbReference>
<dbReference type="InterPro" id="IPR001114">
    <property type="entry name" value="Adenylosuccinate_synthetase"/>
</dbReference>
<dbReference type="InterPro" id="IPR027417">
    <property type="entry name" value="P-loop_NTPase"/>
</dbReference>
<dbReference type="NCBIfam" id="NF002223">
    <property type="entry name" value="PRK01117.1"/>
    <property type="match status" value="1"/>
</dbReference>
<dbReference type="NCBIfam" id="TIGR00184">
    <property type="entry name" value="purA"/>
    <property type="match status" value="1"/>
</dbReference>
<dbReference type="PANTHER" id="PTHR11846">
    <property type="entry name" value="ADENYLOSUCCINATE SYNTHETASE"/>
    <property type="match status" value="1"/>
</dbReference>
<dbReference type="PANTHER" id="PTHR11846:SF0">
    <property type="entry name" value="ADENYLOSUCCINATE SYNTHETASE"/>
    <property type="match status" value="1"/>
</dbReference>
<dbReference type="Pfam" id="PF00709">
    <property type="entry name" value="Adenylsucc_synt"/>
    <property type="match status" value="1"/>
</dbReference>
<dbReference type="SMART" id="SM00788">
    <property type="entry name" value="Adenylsucc_synt"/>
    <property type="match status" value="1"/>
</dbReference>
<dbReference type="SUPFAM" id="SSF52540">
    <property type="entry name" value="P-loop containing nucleoside triphosphate hydrolases"/>
    <property type="match status" value="1"/>
</dbReference>
<dbReference type="PROSITE" id="PS01266">
    <property type="entry name" value="ADENYLOSUCCIN_SYN_1"/>
    <property type="match status" value="1"/>
</dbReference>
<organism>
    <name type="scientific">Thermus thermophilus (strain ATCC 27634 / DSM 579 / HB8)</name>
    <dbReference type="NCBI Taxonomy" id="300852"/>
    <lineage>
        <taxon>Bacteria</taxon>
        <taxon>Thermotogati</taxon>
        <taxon>Deinococcota</taxon>
        <taxon>Deinococci</taxon>
        <taxon>Thermales</taxon>
        <taxon>Thermaceae</taxon>
        <taxon>Thermus</taxon>
    </lineage>
</organism>
<protein>
    <recommendedName>
        <fullName evidence="1">Adenylosuccinate synthetase</fullName>
        <shortName evidence="1">AMPSase</shortName>
        <shortName evidence="1">AdSS</shortName>
        <ecNumber evidence="1">6.3.4.4</ecNumber>
    </recommendedName>
    <alternativeName>
        <fullName evidence="1">IMP--aspartate ligase</fullName>
    </alternativeName>
</protein>
<name>PURA_THET8</name>